<sequence length="1414" mass="157104">MRDLVKQLKSEKHTAEFDALRIKLASPEEVRSWSYGEVKKPETINYRTFKPEREGLFCAKIFGPIKDYECLCGKYKRLKHRGVICEKCGVEVTLAKVRRERMGHIELASPVAHIWYLKSLPSRIGLLLDVTLRDIERILYFEAYVVVDPGMTDLEPRQLLSEEAYLDALEEYGDDFTALMGAEAIQRLLRDIDVEAEVEALRTELQTTTSETKTKKLTKRLKVLSAFLESGNKPEWMILTVLPVLPPDLRPLVPLDGGRFATSDLNDLYRRVINRNNRLKRLLDLNAPDIIVRNEKRMLQEAVDALLDNGRRGRAILGSNRRQLKSLADMIKGKSGRFRQNLLGKRVDYSGRSVIVVGPTLKLHQAGLPKKMALELFKPFIFSKLQLRGLATTVKAAKKLVENEGPEVWDILEEVIREHPILLNRAPTLHRLGIQAFEPVLVEGKAIQLHPLVCTAYNADFDGDQMAVHVPLTLEAQLEARSLMMSTNNVLHPANGEPIIVPSQDVVLGLYYITRDRVNAKGEGMRFADAQEVVRAYENDQVDLHARITVRIKEGILNEAGEIEESDRLVNTAAGRILLWQIVPKGLPFALVDQPMTKKAVTKLLDFCYRNLGLKTTVIFADKLMYMGFHYATHSGVSIGINDLVVPDQKEAIISRAEDEVREIEKQYASGLVTHGERRNKVIDIWSRTNDQVAKAMMEKIAVEKVKDAEGKEVAQSSFNSIYMMSDSGARGSAAQTRQLAGMRGLMARPDGTIIETPITANFREGLNVLQYFISTHGARKGLADTALKTANSGYLTRRLVDVAQDLVVTEHDCGTEASIEMMPHIEGGDVVEPLRERVLGRILAEPVMDPKSRKELLAKDTFLDERRVDILEEHSIDRVRVRSAITCEARYGICSMCYGRDLARGHVVNVGEAIGVVAAQSIGEPGTQLTMRTFHIGGAASRATAANNIGVKSTGKIKLRNLKTVEQAQGNLVAVSRSGELVVQDLQGSEREHYKVPYGATISVRDGDSVKAGQIVAQWDPHTHPIITEVAGTLRFVDLVDGVTMNRQTDELTGLSSIVITSTKQRSASGKELRPMVKLVDKNDDDLFLPGGKVPAHYFLPEGTFLTKEDGTTVNIGDVLARIPQETSKTRDITGGLPRVADLFEARRPKDAAILAEISGVVSFGKDTKDKGRLIITAPDGTTHEELIPKWRHVSVFEGETVEKGEVIADGPRDPHDILRLLGVNALANYIVNEVQEVYRLQGVKINDKHIEVIVRQMLRKVKITQPGDTDLLQNEQVERTRVREENEKIIKKDGTVAKVEPILLGITKASLATESFISAASFQETTRVLTAASVAGKRDDLRGLKENVIVGRLIPAGTGFSYHQQRRAVAGKSVEEKEIEEKRVTASEAEQALSEALKSSAPQEAKAAQKDE</sequence>
<gene>
    <name evidence="1" type="primary">rpoC</name>
    <name type="ordered locus">CBU_0232</name>
</gene>
<feature type="chain" id="PRO_0000067738" description="DNA-directed RNA polymerase subunit beta'">
    <location>
        <begin position="1"/>
        <end position="1414"/>
    </location>
</feature>
<feature type="region of interest" description="Disordered" evidence="2">
    <location>
        <begin position="1392"/>
        <end position="1414"/>
    </location>
</feature>
<feature type="compositionally biased region" description="Low complexity" evidence="2">
    <location>
        <begin position="1392"/>
        <end position="1403"/>
    </location>
</feature>
<feature type="binding site" evidence="1">
    <location>
        <position position="70"/>
    </location>
    <ligand>
        <name>Zn(2+)</name>
        <dbReference type="ChEBI" id="CHEBI:29105"/>
        <label>1</label>
    </ligand>
</feature>
<feature type="binding site" evidence="1">
    <location>
        <position position="72"/>
    </location>
    <ligand>
        <name>Zn(2+)</name>
        <dbReference type="ChEBI" id="CHEBI:29105"/>
        <label>1</label>
    </ligand>
</feature>
<feature type="binding site" evidence="1">
    <location>
        <position position="85"/>
    </location>
    <ligand>
        <name>Zn(2+)</name>
        <dbReference type="ChEBI" id="CHEBI:29105"/>
        <label>1</label>
    </ligand>
</feature>
<feature type="binding site" evidence="1">
    <location>
        <position position="88"/>
    </location>
    <ligand>
        <name>Zn(2+)</name>
        <dbReference type="ChEBI" id="CHEBI:29105"/>
        <label>1</label>
    </ligand>
</feature>
<feature type="binding site" evidence="1">
    <location>
        <position position="460"/>
    </location>
    <ligand>
        <name>Mg(2+)</name>
        <dbReference type="ChEBI" id="CHEBI:18420"/>
    </ligand>
</feature>
<feature type="binding site" evidence="1">
    <location>
        <position position="462"/>
    </location>
    <ligand>
        <name>Mg(2+)</name>
        <dbReference type="ChEBI" id="CHEBI:18420"/>
    </ligand>
</feature>
<feature type="binding site" evidence="1">
    <location>
        <position position="464"/>
    </location>
    <ligand>
        <name>Mg(2+)</name>
        <dbReference type="ChEBI" id="CHEBI:18420"/>
    </ligand>
</feature>
<feature type="binding site" evidence="1">
    <location>
        <position position="814"/>
    </location>
    <ligand>
        <name>Zn(2+)</name>
        <dbReference type="ChEBI" id="CHEBI:29105"/>
        <label>2</label>
    </ligand>
</feature>
<feature type="binding site" evidence="1">
    <location>
        <position position="888"/>
    </location>
    <ligand>
        <name>Zn(2+)</name>
        <dbReference type="ChEBI" id="CHEBI:29105"/>
        <label>2</label>
    </ligand>
</feature>
<feature type="binding site" evidence="1">
    <location>
        <position position="895"/>
    </location>
    <ligand>
        <name>Zn(2+)</name>
        <dbReference type="ChEBI" id="CHEBI:29105"/>
        <label>2</label>
    </ligand>
</feature>
<feature type="binding site" evidence="1">
    <location>
        <position position="898"/>
    </location>
    <ligand>
        <name>Zn(2+)</name>
        <dbReference type="ChEBI" id="CHEBI:29105"/>
        <label>2</label>
    </ligand>
</feature>
<dbReference type="EC" id="2.7.7.6" evidence="1"/>
<dbReference type="EMBL" id="AE016828">
    <property type="protein sequence ID" value="AAO89790.1"/>
    <property type="molecule type" value="Genomic_DNA"/>
</dbReference>
<dbReference type="RefSeq" id="NP_819276.1">
    <property type="nucleotide sequence ID" value="NC_002971.4"/>
</dbReference>
<dbReference type="RefSeq" id="WP_010957448.1">
    <property type="nucleotide sequence ID" value="NC_002971.4"/>
</dbReference>
<dbReference type="SMR" id="Q83ET0"/>
<dbReference type="STRING" id="227377.CBU_0232"/>
<dbReference type="EnsemblBacteria" id="AAO89790">
    <property type="protein sequence ID" value="AAO89790"/>
    <property type="gene ID" value="CBU_0232"/>
</dbReference>
<dbReference type="GeneID" id="1208113"/>
<dbReference type="KEGG" id="cbu:CBU_0232"/>
<dbReference type="PATRIC" id="fig|227377.7.peg.226"/>
<dbReference type="eggNOG" id="COG0086">
    <property type="taxonomic scope" value="Bacteria"/>
</dbReference>
<dbReference type="HOGENOM" id="CLU_000524_3_1_6"/>
<dbReference type="OrthoDB" id="9815296at2"/>
<dbReference type="Proteomes" id="UP000002671">
    <property type="component" value="Chromosome"/>
</dbReference>
<dbReference type="GO" id="GO:0000428">
    <property type="term" value="C:DNA-directed RNA polymerase complex"/>
    <property type="evidence" value="ECO:0007669"/>
    <property type="project" value="UniProtKB-KW"/>
</dbReference>
<dbReference type="GO" id="GO:0003677">
    <property type="term" value="F:DNA binding"/>
    <property type="evidence" value="ECO:0007669"/>
    <property type="project" value="UniProtKB-UniRule"/>
</dbReference>
<dbReference type="GO" id="GO:0003899">
    <property type="term" value="F:DNA-directed RNA polymerase activity"/>
    <property type="evidence" value="ECO:0007669"/>
    <property type="project" value="UniProtKB-UniRule"/>
</dbReference>
<dbReference type="GO" id="GO:0000287">
    <property type="term" value="F:magnesium ion binding"/>
    <property type="evidence" value="ECO:0007669"/>
    <property type="project" value="UniProtKB-UniRule"/>
</dbReference>
<dbReference type="GO" id="GO:0008270">
    <property type="term" value="F:zinc ion binding"/>
    <property type="evidence" value="ECO:0007669"/>
    <property type="project" value="UniProtKB-UniRule"/>
</dbReference>
<dbReference type="GO" id="GO:0006351">
    <property type="term" value="P:DNA-templated transcription"/>
    <property type="evidence" value="ECO:0007669"/>
    <property type="project" value="UniProtKB-UniRule"/>
</dbReference>
<dbReference type="CDD" id="cd02655">
    <property type="entry name" value="RNAP_beta'_C"/>
    <property type="match status" value="1"/>
</dbReference>
<dbReference type="CDD" id="cd01609">
    <property type="entry name" value="RNAP_beta'_N"/>
    <property type="match status" value="1"/>
</dbReference>
<dbReference type="FunFam" id="1.10.132.30:FF:000003">
    <property type="entry name" value="DNA-directed RNA polymerase subunit beta"/>
    <property type="match status" value="1"/>
</dbReference>
<dbReference type="FunFam" id="1.10.150.390:FF:000002">
    <property type="entry name" value="DNA-directed RNA polymerase subunit beta"/>
    <property type="match status" value="1"/>
</dbReference>
<dbReference type="FunFam" id="4.10.860.120:FF:000001">
    <property type="entry name" value="DNA-directed RNA polymerase subunit beta"/>
    <property type="match status" value="1"/>
</dbReference>
<dbReference type="Gene3D" id="1.10.132.30">
    <property type="match status" value="1"/>
</dbReference>
<dbReference type="Gene3D" id="1.10.150.390">
    <property type="match status" value="1"/>
</dbReference>
<dbReference type="Gene3D" id="1.10.1790.20">
    <property type="match status" value="1"/>
</dbReference>
<dbReference type="Gene3D" id="1.10.40.90">
    <property type="match status" value="1"/>
</dbReference>
<dbReference type="Gene3D" id="2.40.40.20">
    <property type="match status" value="1"/>
</dbReference>
<dbReference type="Gene3D" id="2.40.50.100">
    <property type="match status" value="3"/>
</dbReference>
<dbReference type="Gene3D" id="4.10.860.120">
    <property type="entry name" value="RNA polymerase II, clamp domain"/>
    <property type="match status" value="1"/>
</dbReference>
<dbReference type="Gene3D" id="1.10.274.100">
    <property type="entry name" value="RNA polymerase Rpb1, domain 3"/>
    <property type="match status" value="1"/>
</dbReference>
<dbReference type="HAMAP" id="MF_01322">
    <property type="entry name" value="RNApol_bact_RpoC"/>
    <property type="match status" value="1"/>
</dbReference>
<dbReference type="InterPro" id="IPR045867">
    <property type="entry name" value="DNA-dir_RpoC_beta_prime"/>
</dbReference>
<dbReference type="InterPro" id="IPR012754">
    <property type="entry name" value="DNA-dir_RpoC_beta_prime_bact"/>
</dbReference>
<dbReference type="InterPro" id="IPR000722">
    <property type="entry name" value="RNA_pol_asu"/>
</dbReference>
<dbReference type="InterPro" id="IPR006592">
    <property type="entry name" value="RNA_pol_N"/>
</dbReference>
<dbReference type="InterPro" id="IPR007080">
    <property type="entry name" value="RNA_pol_Rpb1_1"/>
</dbReference>
<dbReference type="InterPro" id="IPR007066">
    <property type="entry name" value="RNA_pol_Rpb1_3"/>
</dbReference>
<dbReference type="InterPro" id="IPR042102">
    <property type="entry name" value="RNA_pol_Rpb1_3_sf"/>
</dbReference>
<dbReference type="InterPro" id="IPR007083">
    <property type="entry name" value="RNA_pol_Rpb1_4"/>
</dbReference>
<dbReference type="InterPro" id="IPR007081">
    <property type="entry name" value="RNA_pol_Rpb1_5"/>
</dbReference>
<dbReference type="InterPro" id="IPR044893">
    <property type="entry name" value="RNA_pol_Rpb1_clamp_domain"/>
</dbReference>
<dbReference type="InterPro" id="IPR038120">
    <property type="entry name" value="Rpb1_funnel_sf"/>
</dbReference>
<dbReference type="NCBIfam" id="TIGR02386">
    <property type="entry name" value="rpoC_TIGR"/>
    <property type="match status" value="1"/>
</dbReference>
<dbReference type="PANTHER" id="PTHR19376">
    <property type="entry name" value="DNA-DIRECTED RNA POLYMERASE"/>
    <property type="match status" value="1"/>
</dbReference>
<dbReference type="PANTHER" id="PTHR19376:SF54">
    <property type="entry name" value="DNA-DIRECTED RNA POLYMERASE SUBUNIT BETA"/>
    <property type="match status" value="1"/>
</dbReference>
<dbReference type="Pfam" id="PF04997">
    <property type="entry name" value="RNA_pol_Rpb1_1"/>
    <property type="match status" value="1"/>
</dbReference>
<dbReference type="Pfam" id="PF00623">
    <property type="entry name" value="RNA_pol_Rpb1_2"/>
    <property type="match status" value="1"/>
</dbReference>
<dbReference type="Pfam" id="PF04983">
    <property type="entry name" value="RNA_pol_Rpb1_3"/>
    <property type="match status" value="1"/>
</dbReference>
<dbReference type="Pfam" id="PF05000">
    <property type="entry name" value="RNA_pol_Rpb1_4"/>
    <property type="match status" value="1"/>
</dbReference>
<dbReference type="Pfam" id="PF04998">
    <property type="entry name" value="RNA_pol_Rpb1_5"/>
    <property type="match status" value="1"/>
</dbReference>
<dbReference type="SMART" id="SM00663">
    <property type="entry name" value="RPOLA_N"/>
    <property type="match status" value="1"/>
</dbReference>
<dbReference type="SUPFAM" id="SSF64484">
    <property type="entry name" value="beta and beta-prime subunits of DNA dependent RNA-polymerase"/>
    <property type="match status" value="1"/>
</dbReference>
<protein>
    <recommendedName>
        <fullName evidence="1">DNA-directed RNA polymerase subunit beta'</fullName>
        <shortName evidence="1">RNAP subunit beta'</shortName>
        <ecNumber evidence="1">2.7.7.6</ecNumber>
    </recommendedName>
    <alternativeName>
        <fullName evidence="1">RNA polymerase subunit beta'</fullName>
    </alternativeName>
    <alternativeName>
        <fullName evidence="1">Transcriptase subunit beta'</fullName>
    </alternativeName>
</protein>
<comment type="function">
    <text evidence="1">DNA-dependent RNA polymerase catalyzes the transcription of DNA into RNA using the four ribonucleoside triphosphates as substrates.</text>
</comment>
<comment type="catalytic activity">
    <reaction evidence="1">
        <text>RNA(n) + a ribonucleoside 5'-triphosphate = RNA(n+1) + diphosphate</text>
        <dbReference type="Rhea" id="RHEA:21248"/>
        <dbReference type="Rhea" id="RHEA-COMP:14527"/>
        <dbReference type="Rhea" id="RHEA-COMP:17342"/>
        <dbReference type="ChEBI" id="CHEBI:33019"/>
        <dbReference type="ChEBI" id="CHEBI:61557"/>
        <dbReference type="ChEBI" id="CHEBI:140395"/>
        <dbReference type="EC" id="2.7.7.6"/>
    </reaction>
</comment>
<comment type="cofactor">
    <cofactor evidence="1">
        <name>Mg(2+)</name>
        <dbReference type="ChEBI" id="CHEBI:18420"/>
    </cofactor>
    <text evidence="1">Binds 1 Mg(2+) ion per subunit.</text>
</comment>
<comment type="cofactor">
    <cofactor evidence="1">
        <name>Zn(2+)</name>
        <dbReference type="ChEBI" id="CHEBI:29105"/>
    </cofactor>
    <text evidence="1">Binds 2 Zn(2+) ions per subunit.</text>
</comment>
<comment type="subunit">
    <text evidence="1">The RNAP catalytic core consists of 2 alpha, 1 beta, 1 beta' and 1 omega subunit. When a sigma factor is associated with the core the holoenzyme is formed, which can initiate transcription.</text>
</comment>
<comment type="similarity">
    <text evidence="1">Belongs to the RNA polymerase beta' chain family.</text>
</comment>
<accession>Q83ET0</accession>
<organism>
    <name type="scientific">Coxiella burnetii (strain RSA 493 / Nine Mile phase I)</name>
    <dbReference type="NCBI Taxonomy" id="227377"/>
    <lineage>
        <taxon>Bacteria</taxon>
        <taxon>Pseudomonadati</taxon>
        <taxon>Pseudomonadota</taxon>
        <taxon>Gammaproteobacteria</taxon>
        <taxon>Legionellales</taxon>
        <taxon>Coxiellaceae</taxon>
        <taxon>Coxiella</taxon>
    </lineage>
</organism>
<evidence type="ECO:0000255" key="1">
    <source>
        <dbReference type="HAMAP-Rule" id="MF_01322"/>
    </source>
</evidence>
<evidence type="ECO:0000256" key="2">
    <source>
        <dbReference type="SAM" id="MobiDB-lite"/>
    </source>
</evidence>
<keyword id="KW-0240">DNA-directed RNA polymerase</keyword>
<keyword id="KW-0460">Magnesium</keyword>
<keyword id="KW-0479">Metal-binding</keyword>
<keyword id="KW-0548">Nucleotidyltransferase</keyword>
<keyword id="KW-1185">Reference proteome</keyword>
<keyword id="KW-0804">Transcription</keyword>
<keyword id="KW-0808">Transferase</keyword>
<keyword id="KW-0862">Zinc</keyword>
<reference key="1">
    <citation type="journal article" date="2003" name="Proc. Natl. Acad. Sci. U.S.A.">
        <title>Complete genome sequence of the Q-fever pathogen, Coxiella burnetii.</title>
        <authorList>
            <person name="Seshadri R."/>
            <person name="Paulsen I.T."/>
            <person name="Eisen J.A."/>
            <person name="Read T.D."/>
            <person name="Nelson K.E."/>
            <person name="Nelson W.C."/>
            <person name="Ward N.L."/>
            <person name="Tettelin H."/>
            <person name="Davidsen T.M."/>
            <person name="Beanan M.J."/>
            <person name="DeBoy R.T."/>
            <person name="Daugherty S.C."/>
            <person name="Brinkac L.M."/>
            <person name="Madupu R."/>
            <person name="Dodson R.J."/>
            <person name="Khouri H.M."/>
            <person name="Lee K.H."/>
            <person name="Carty H.A."/>
            <person name="Scanlan D."/>
            <person name="Heinzen R.A."/>
            <person name="Thompson H.A."/>
            <person name="Samuel J.E."/>
            <person name="Fraser C.M."/>
            <person name="Heidelberg J.F."/>
        </authorList>
    </citation>
    <scope>NUCLEOTIDE SEQUENCE [LARGE SCALE GENOMIC DNA]</scope>
    <source>
        <strain>RSA 493 / Nine Mile phase I</strain>
    </source>
</reference>
<proteinExistence type="inferred from homology"/>
<name>RPOC_COXBU</name>